<keyword id="KW-1185">Reference proteome</keyword>
<keyword id="KW-0687">Ribonucleoprotein</keyword>
<keyword id="KW-0689">Ribosomal protein</keyword>
<proteinExistence type="inferred from homology"/>
<comment type="similarity">
    <text evidence="1">Belongs to the bacterial ribosomal protein bL33 family.</text>
</comment>
<organism>
    <name type="scientific">Brucella abortus (strain 2308)</name>
    <dbReference type="NCBI Taxonomy" id="359391"/>
    <lineage>
        <taxon>Bacteria</taxon>
        <taxon>Pseudomonadati</taxon>
        <taxon>Pseudomonadota</taxon>
        <taxon>Alphaproteobacteria</taxon>
        <taxon>Hyphomicrobiales</taxon>
        <taxon>Brucellaceae</taxon>
        <taxon>Brucella/Ochrobactrum group</taxon>
        <taxon>Brucella</taxon>
    </lineage>
</organism>
<gene>
    <name evidence="1" type="primary">rpmG</name>
    <name type="ordered locus">BAB2_0631</name>
</gene>
<protein>
    <recommendedName>
        <fullName evidence="1">Large ribosomal subunit protein bL33</fullName>
    </recommendedName>
    <alternativeName>
        <fullName evidence="2">50S ribosomal protein L33</fullName>
    </alternativeName>
</protein>
<accession>Q2YKM8</accession>
<dbReference type="EMBL" id="AM040265">
    <property type="protein sequence ID" value="CAJ12797.1"/>
    <property type="molecule type" value="Genomic_DNA"/>
</dbReference>
<dbReference type="RefSeq" id="WP_002966024.1">
    <property type="nucleotide sequence ID" value="NZ_KN046823.1"/>
</dbReference>
<dbReference type="SMR" id="Q2YKM8"/>
<dbReference type="STRING" id="359391.BAB2_0631"/>
<dbReference type="GeneID" id="97535268"/>
<dbReference type="KEGG" id="bmf:BAB2_0631"/>
<dbReference type="PATRIC" id="fig|359391.11.peg.2812"/>
<dbReference type="HOGENOM" id="CLU_190949_1_1_5"/>
<dbReference type="Proteomes" id="UP000002719">
    <property type="component" value="Chromosome II"/>
</dbReference>
<dbReference type="GO" id="GO:0022625">
    <property type="term" value="C:cytosolic large ribosomal subunit"/>
    <property type="evidence" value="ECO:0007669"/>
    <property type="project" value="TreeGrafter"/>
</dbReference>
<dbReference type="GO" id="GO:0003735">
    <property type="term" value="F:structural constituent of ribosome"/>
    <property type="evidence" value="ECO:0007669"/>
    <property type="project" value="InterPro"/>
</dbReference>
<dbReference type="GO" id="GO:0006412">
    <property type="term" value="P:translation"/>
    <property type="evidence" value="ECO:0007669"/>
    <property type="project" value="UniProtKB-UniRule"/>
</dbReference>
<dbReference type="Gene3D" id="2.20.28.120">
    <property type="entry name" value="Ribosomal protein L33"/>
    <property type="match status" value="1"/>
</dbReference>
<dbReference type="HAMAP" id="MF_00294">
    <property type="entry name" value="Ribosomal_bL33"/>
    <property type="match status" value="1"/>
</dbReference>
<dbReference type="InterPro" id="IPR001705">
    <property type="entry name" value="Ribosomal_bL33"/>
</dbReference>
<dbReference type="InterPro" id="IPR018264">
    <property type="entry name" value="Ribosomal_bL33_CS"/>
</dbReference>
<dbReference type="InterPro" id="IPR038584">
    <property type="entry name" value="Ribosomal_bL33_sf"/>
</dbReference>
<dbReference type="InterPro" id="IPR011332">
    <property type="entry name" value="Ribosomal_zn-bd"/>
</dbReference>
<dbReference type="NCBIfam" id="NF001860">
    <property type="entry name" value="PRK00595.1"/>
    <property type="match status" value="1"/>
</dbReference>
<dbReference type="NCBIfam" id="TIGR01023">
    <property type="entry name" value="rpmG_bact"/>
    <property type="match status" value="1"/>
</dbReference>
<dbReference type="PANTHER" id="PTHR15238">
    <property type="entry name" value="54S RIBOSOMAL PROTEIN L39, MITOCHONDRIAL"/>
    <property type="match status" value="1"/>
</dbReference>
<dbReference type="PANTHER" id="PTHR15238:SF1">
    <property type="entry name" value="LARGE RIBOSOMAL SUBUNIT PROTEIN BL33M"/>
    <property type="match status" value="1"/>
</dbReference>
<dbReference type="Pfam" id="PF00471">
    <property type="entry name" value="Ribosomal_L33"/>
    <property type="match status" value="1"/>
</dbReference>
<dbReference type="SUPFAM" id="SSF57829">
    <property type="entry name" value="Zn-binding ribosomal proteins"/>
    <property type="match status" value="1"/>
</dbReference>
<dbReference type="PROSITE" id="PS00582">
    <property type="entry name" value="RIBOSOMAL_L33"/>
    <property type="match status" value="1"/>
</dbReference>
<evidence type="ECO:0000255" key="1">
    <source>
        <dbReference type="HAMAP-Rule" id="MF_00294"/>
    </source>
</evidence>
<evidence type="ECO:0000305" key="2"/>
<feature type="chain" id="PRO_0000356409" description="Large ribosomal subunit protein bL33">
    <location>
        <begin position="1"/>
        <end position="55"/>
    </location>
</feature>
<name>RL33_BRUA2</name>
<sequence>MAKATTIKIKLLSTADTGFFYVTKKNSRTMTEKMTKTKYDPIARKHVEFKETKIK</sequence>
<reference key="1">
    <citation type="journal article" date="2005" name="Infect. Immun.">
        <title>Whole-genome analyses of speciation events in pathogenic Brucellae.</title>
        <authorList>
            <person name="Chain P.S."/>
            <person name="Comerci D.J."/>
            <person name="Tolmasky M.E."/>
            <person name="Larimer F.W."/>
            <person name="Malfatti S.A."/>
            <person name="Vergez L.M."/>
            <person name="Aguero F."/>
            <person name="Land M.L."/>
            <person name="Ugalde R.A."/>
            <person name="Garcia E."/>
        </authorList>
    </citation>
    <scope>NUCLEOTIDE SEQUENCE [LARGE SCALE GENOMIC DNA]</scope>
    <source>
        <strain>2308</strain>
    </source>
</reference>